<keyword id="KW-0472">Membrane</keyword>
<keyword id="KW-1185">Reference proteome</keyword>
<keyword id="KW-0762">Sugar transport</keyword>
<keyword id="KW-0812">Transmembrane</keyword>
<keyword id="KW-1133">Transmembrane helix</keyword>
<keyword id="KW-0813">Transport</keyword>
<comment type="subcellular location">
    <subcellularLocation>
        <location evidence="3">Membrane</location>
        <topology evidence="3">Multi-pass membrane protein</topology>
    </subcellularLocation>
</comment>
<comment type="similarity">
    <text evidence="3">Belongs to the TPT transporter family. TPT (TC 2.A.7.9) subfamily.</text>
</comment>
<evidence type="ECO:0000255" key="1"/>
<evidence type="ECO:0000256" key="2">
    <source>
        <dbReference type="SAM" id="MobiDB-lite"/>
    </source>
</evidence>
<evidence type="ECO:0000305" key="3"/>
<accession>Q9C8M1</accession>
<proteinExistence type="inferred from homology"/>
<name>PT153_ARATH</name>
<feature type="chain" id="PRO_0000406108" description="Probable sugar phosphate/phosphate translocator At1g53660">
    <location>
        <begin position="1"/>
        <end position="332"/>
    </location>
</feature>
<feature type="transmembrane region" description="Helical" evidence="1">
    <location>
        <begin position="19"/>
        <end position="39"/>
    </location>
</feature>
<feature type="transmembrane region" description="Helical" evidence="1">
    <location>
        <begin position="46"/>
        <end position="66"/>
    </location>
</feature>
<feature type="transmembrane region" description="Helical" evidence="1">
    <location>
        <begin position="82"/>
        <end position="102"/>
    </location>
</feature>
<feature type="transmembrane region" description="Helical" evidence="1">
    <location>
        <begin position="120"/>
        <end position="140"/>
    </location>
</feature>
<feature type="transmembrane region" description="Helical" evidence="1">
    <location>
        <begin position="143"/>
        <end position="163"/>
    </location>
</feature>
<feature type="transmembrane region" description="Helical" evidence="1">
    <location>
        <begin position="165"/>
        <end position="185"/>
    </location>
</feature>
<feature type="transmembrane region" description="Helical" evidence="1">
    <location>
        <begin position="199"/>
        <end position="219"/>
    </location>
</feature>
<feature type="transmembrane region" description="Helical" evidence="1">
    <location>
        <begin position="233"/>
        <end position="253"/>
    </location>
</feature>
<feature type="transmembrane region" description="Helical" evidence="1">
    <location>
        <begin position="259"/>
        <end position="281"/>
    </location>
</feature>
<feature type="transmembrane region" description="Helical" evidence="1">
    <location>
        <begin position="285"/>
        <end position="304"/>
    </location>
</feature>
<feature type="region of interest" description="Disordered" evidence="2">
    <location>
        <begin position="312"/>
        <end position="332"/>
    </location>
</feature>
<feature type="compositionally biased region" description="Polar residues" evidence="2">
    <location>
        <begin position="312"/>
        <end position="322"/>
    </location>
</feature>
<feature type="compositionally biased region" description="Basic and acidic residues" evidence="2">
    <location>
        <begin position="323"/>
        <end position="332"/>
    </location>
</feature>
<gene>
    <name type="ordered locus">At1g53660</name>
    <name type="ORF">F22G10.26</name>
</gene>
<protein>
    <recommendedName>
        <fullName>Probable sugar phosphate/phosphate translocator At1g53660</fullName>
    </recommendedName>
</protein>
<reference key="1">
    <citation type="journal article" date="2000" name="Nature">
        <title>Sequence and analysis of chromosome 1 of the plant Arabidopsis thaliana.</title>
        <authorList>
            <person name="Theologis A."/>
            <person name="Ecker J.R."/>
            <person name="Palm C.J."/>
            <person name="Federspiel N.A."/>
            <person name="Kaul S."/>
            <person name="White O."/>
            <person name="Alonso J."/>
            <person name="Altafi H."/>
            <person name="Araujo R."/>
            <person name="Bowman C.L."/>
            <person name="Brooks S.Y."/>
            <person name="Buehler E."/>
            <person name="Chan A."/>
            <person name="Chao Q."/>
            <person name="Chen H."/>
            <person name="Cheuk R.F."/>
            <person name="Chin C.W."/>
            <person name="Chung M.K."/>
            <person name="Conn L."/>
            <person name="Conway A.B."/>
            <person name="Conway A.R."/>
            <person name="Creasy T.H."/>
            <person name="Dewar K."/>
            <person name="Dunn P."/>
            <person name="Etgu P."/>
            <person name="Feldblyum T.V."/>
            <person name="Feng J.-D."/>
            <person name="Fong B."/>
            <person name="Fujii C.Y."/>
            <person name="Gill J.E."/>
            <person name="Goldsmith A.D."/>
            <person name="Haas B."/>
            <person name="Hansen N.F."/>
            <person name="Hughes B."/>
            <person name="Huizar L."/>
            <person name="Hunter J.L."/>
            <person name="Jenkins J."/>
            <person name="Johnson-Hopson C."/>
            <person name="Khan S."/>
            <person name="Khaykin E."/>
            <person name="Kim C.J."/>
            <person name="Koo H.L."/>
            <person name="Kremenetskaia I."/>
            <person name="Kurtz D.B."/>
            <person name="Kwan A."/>
            <person name="Lam B."/>
            <person name="Langin-Hooper S."/>
            <person name="Lee A."/>
            <person name="Lee J.M."/>
            <person name="Lenz C.A."/>
            <person name="Li J.H."/>
            <person name="Li Y.-P."/>
            <person name="Lin X."/>
            <person name="Liu S.X."/>
            <person name="Liu Z.A."/>
            <person name="Luros J.S."/>
            <person name="Maiti R."/>
            <person name="Marziali A."/>
            <person name="Militscher J."/>
            <person name="Miranda M."/>
            <person name="Nguyen M."/>
            <person name="Nierman W.C."/>
            <person name="Osborne B.I."/>
            <person name="Pai G."/>
            <person name="Peterson J."/>
            <person name="Pham P.K."/>
            <person name="Rizzo M."/>
            <person name="Rooney T."/>
            <person name="Rowley D."/>
            <person name="Sakano H."/>
            <person name="Salzberg S.L."/>
            <person name="Schwartz J.R."/>
            <person name="Shinn P."/>
            <person name="Southwick A.M."/>
            <person name="Sun H."/>
            <person name="Tallon L.J."/>
            <person name="Tambunga G."/>
            <person name="Toriumi M.J."/>
            <person name="Town C.D."/>
            <person name="Utterback T."/>
            <person name="Van Aken S."/>
            <person name="Vaysberg M."/>
            <person name="Vysotskaia V.S."/>
            <person name="Walker M."/>
            <person name="Wu D."/>
            <person name="Yu G."/>
            <person name="Fraser C.M."/>
            <person name="Venter J.C."/>
            <person name="Davis R.W."/>
        </authorList>
    </citation>
    <scope>NUCLEOTIDE SEQUENCE [LARGE SCALE GENOMIC DNA]</scope>
    <source>
        <strain>cv. Columbia</strain>
    </source>
</reference>
<reference key="2">
    <citation type="journal article" date="2017" name="Plant J.">
        <title>Araport11: a complete reannotation of the Arabidopsis thaliana reference genome.</title>
        <authorList>
            <person name="Cheng C.Y."/>
            <person name="Krishnakumar V."/>
            <person name="Chan A.P."/>
            <person name="Thibaud-Nissen F."/>
            <person name="Schobel S."/>
            <person name="Town C.D."/>
        </authorList>
    </citation>
    <scope>GENOME REANNOTATION</scope>
    <source>
        <strain>cv. Columbia</strain>
    </source>
</reference>
<reference key="3">
    <citation type="journal article" date="2014" name="Proc. Natl. Acad. Sci. U.S.A.">
        <title>The Golgi localized bifunctional UDP-rhamnose/UDP-galactose transporter family of Arabidopsis.</title>
        <authorList>
            <person name="Rautengarten C."/>
            <person name="Ebert B."/>
            <person name="Moreno I."/>
            <person name="Temple H."/>
            <person name="Herter T."/>
            <person name="Link B."/>
            <person name="Donas-Cofre D."/>
            <person name="Moreno A."/>
            <person name="Saez-Aguayo S."/>
            <person name="Blanco F."/>
            <person name="Mortimer J.C."/>
            <person name="Schultink A."/>
            <person name="Reiter W.D."/>
            <person name="Dupree P."/>
            <person name="Pauly M."/>
            <person name="Heazlewood J.L."/>
            <person name="Scheller H.V."/>
            <person name="Orellana A."/>
        </authorList>
    </citation>
    <scope>GENE FAMILY</scope>
</reference>
<dbReference type="EMBL" id="AC024260">
    <property type="protein sequence ID" value="AAG51967.1"/>
    <property type="molecule type" value="Genomic_DNA"/>
</dbReference>
<dbReference type="EMBL" id="CP002684">
    <property type="protein sequence ID" value="AEE32978.1"/>
    <property type="molecule type" value="Genomic_DNA"/>
</dbReference>
<dbReference type="PIR" id="G96576">
    <property type="entry name" value="G96576"/>
</dbReference>
<dbReference type="RefSeq" id="NP_175770.4">
    <property type="nucleotide sequence ID" value="NM_104244.5"/>
</dbReference>
<dbReference type="SMR" id="Q9C8M1"/>
<dbReference type="STRING" id="3702.Q9C8M1"/>
<dbReference type="PaxDb" id="3702-AT1G53660.1"/>
<dbReference type="EnsemblPlants" id="AT1G53660.1">
    <property type="protein sequence ID" value="AT1G53660.1"/>
    <property type="gene ID" value="AT1G53660"/>
</dbReference>
<dbReference type="GeneID" id="841803"/>
<dbReference type="Gramene" id="AT1G53660.1">
    <property type="protein sequence ID" value="AT1G53660.1"/>
    <property type="gene ID" value="AT1G53660"/>
</dbReference>
<dbReference type="KEGG" id="ath:AT1G53660"/>
<dbReference type="Araport" id="AT1G53660"/>
<dbReference type="TAIR" id="AT1G53660"/>
<dbReference type="eggNOG" id="KOG1441">
    <property type="taxonomic scope" value="Eukaryota"/>
</dbReference>
<dbReference type="HOGENOM" id="CLU_022332_3_0_1"/>
<dbReference type="InParanoid" id="Q9C8M1"/>
<dbReference type="PhylomeDB" id="Q9C8M1"/>
<dbReference type="PRO" id="PR:Q9C8M1"/>
<dbReference type="Proteomes" id="UP000006548">
    <property type="component" value="Chromosome 1"/>
</dbReference>
<dbReference type="ExpressionAtlas" id="Q9C8M1">
    <property type="expression patterns" value="baseline and differential"/>
</dbReference>
<dbReference type="GO" id="GO:0016020">
    <property type="term" value="C:membrane"/>
    <property type="evidence" value="ECO:0007669"/>
    <property type="project" value="UniProtKB-SubCell"/>
</dbReference>
<dbReference type="InterPro" id="IPR004853">
    <property type="entry name" value="Sugar_P_trans_dom"/>
</dbReference>
<dbReference type="InterPro" id="IPR050186">
    <property type="entry name" value="TPT_transporter"/>
</dbReference>
<dbReference type="PANTHER" id="PTHR11132">
    <property type="entry name" value="SOLUTE CARRIER FAMILY 35"/>
    <property type="match status" value="1"/>
</dbReference>
<dbReference type="Pfam" id="PF03151">
    <property type="entry name" value="TPT"/>
    <property type="match status" value="1"/>
</dbReference>
<dbReference type="SUPFAM" id="SSF103481">
    <property type="entry name" value="Multidrug resistance efflux transporter EmrE"/>
    <property type="match status" value="1"/>
</dbReference>
<organism>
    <name type="scientific">Arabidopsis thaliana</name>
    <name type="common">Mouse-ear cress</name>
    <dbReference type="NCBI Taxonomy" id="3702"/>
    <lineage>
        <taxon>Eukaryota</taxon>
        <taxon>Viridiplantae</taxon>
        <taxon>Streptophyta</taxon>
        <taxon>Embryophyta</taxon>
        <taxon>Tracheophyta</taxon>
        <taxon>Spermatophyta</taxon>
        <taxon>Magnoliopsida</taxon>
        <taxon>eudicotyledons</taxon>
        <taxon>Gunneridae</taxon>
        <taxon>Pentapetalae</taxon>
        <taxon>rosids</taxon>
        <taxon>malvids</taxon>
        <taxon>Brassicales</taxon>
        <taxon>Brassicaceae</taxon>
        <taxon>Camelineae</taxon>
        <taxon>Arabidopsis</taxon>
    </lineage>
</organism>
<sequence length="332" mass="37006">MADRSRIRGFLREEHVTYASILLYITLSSGQIFFNKWVLSSKEINFPYPLGLTLLHMTFSSVLCFLLTKVFKVMKVEEGMTLEIYVTSVIPIGAMFAMTLWLGNTAYLYITVAFSQMLKAIMPVAVFILGVCVGLEIMSCKMLLIMSVISFGVLVSSYGELNINWVGVVYQMGGIVSEALRLILMEILVKRKGIKLNPLSLMYYMSPCSAICLFIPWIFLEKSKMDTWNFHVLVLSLNSLCTFALNLSVFLVISRTSALTIRIAGVVKDWLVVLVSALLFAETKLTIINLFGYAVAIVGVATYNNHKPKNGESITLVSQSPKNSDKKPDGPL</sequence>